<keyword id="KW-0007">Acetylation</keyword>
<keyword id="KW-1185">Reference proteome</keyword>
<keyword id="KW-0687">Ribonucleoprotein</keyword>
<keyword id="KW-0689">Ribosomal protein</keyword>
<keyword id="KW-0694">RNA-binding</keyword>
<keyword id="KW-0699">rRNA-binding</keyword>
<reference key="1">
    <citation type="journal article" date="2002" name="Nucleic Acids Res.">
        <title>Genome sequence of Shigella flexneri 2a: insights into pathogenicity through comparison with genomes of Escherichia coli K12 and O157.</title>
        <authorList>
            <person name="Jin Q."/>
            <person name="Yuan Z."/>
            <person name="Xu J."/>
            <person name="Wang Y."/>
            <person name="Shen Y."/>
            <person name="Lu W."/>
            <person name="Wang J."/>
            <person name="Liu H."/>
            <person name="Yang J."/>
            <person name="Yang F."/>
            <person name="Zhang X."/>
            <person name="Zhang J."/>
            <person name="Yang G."/>
            <person name="Wu H."/>
            <person name="Qu D."/>
            <person name="Dong J."/>
            <person name="Sun L."/>
            <person name="Xue Y."/>
            <person name="Zhao A."/>
            <person name="Gao Y."/>
            <person name="Zhu J."/>
            <person name="Kan B."/>
            <person name="Ding K."/>
            <person name="Chen S."/>
            <person name="Cheng H."/>
            <person name="Yao Z."/>
            <person name="He B."/>
            <person name="Chen R."/>
            <person name="Ma D."/>
            <person name="Qiang B."/>
            <person name="Wen Y."/>
            <person name="Hou Y."/>
            <person name="Yu J."/>
        </authorList>
    </citation>
    <scope>NUCLEOTIDE SEQUENCE [LARGE SCALE GENOMIC DNA]</scope>
    <source>
        <strain>301 / Serotype 2a</strain>
    </source>
</reference>
<reference key="2">
    <citation type="journal article" date="2003" name="Infect. Immun.">
        <title>Complete genome sequence and comparative genomics of Shigella flexneri serotype 2a strain 2457T.</title>
        <authorList>
            <person name="Wei J."/>
            <person name="Goldberg M.B."/>
            <person name="Burland V."/>
            <person name="Venkatesan M.M."/>
            <person name="Deng W."/>
            <person name="Fournier G."/>
            <person name="Mayhew G.F."/>
            <person name="Plunkett G. III"/>
            <person name="Rose D.J."/>
            <person name="Darling A."/>
            <person name="Mau B."/>
            <person name="Perna N.T."/>
            <person name="Payne S.M."/>
            <person name="Runyen-Janecky L.J."/>
            <person name="Zhou S."/>
            <person name="Schwartz D.C."/>
            <person name="Blattner F.R."/>
        </authorList>
    </citation>
    <scope>NUCLEOTIDE SEQUENCE [LARGE SCALE GENOMIC DNA]</scope>
    <source>
        <strain>ATCC 700930 / 2457T / Serotype 2a</strain>
    </source>
</reference>
<dbReference type="EMBL" id="AE005674">
    <property type="protein sequence ID" value="AAN45773.1"/>
    <property type="molecule type" value="Genomic_DNA"/>
</dbReference>
<dbReference type="EMBL" id="AE014073">
    <property type="protein sequence ID" value="AAP19557.1"/>
    <property type="molecule type" value="Genomic_DNA"/>
</dbReference>
<dbReference type="RefSeq" id="NP_710066.1">
    <property type="nucleotide sequence ID" value="NC_004337.2"/>
</dbReference>
<dbReference type="RefSeq" id="WP_001196062.1">
    <property type="nucleotide sequence ID" value="NZ_WPGW01000113.1"/>
</dbReference>
<dbReference type="SMR" id="P0A7R4"/>
<dbReference type="STRING" id="198214.SF4356"/>
<dbReference type="PaxDb" id="198214-SF4356"/>
<dbReference type="GeneID" id="1027510"/>
<dbReference type="GeneID" id="93777620"/>
<dbReference type="KEGG" id="sfl:SF4356"/>
<dbReference type="KEGG" id="sfx:S4628"/>
<dbReference type="PATRIC" id="fig|198214.7.peg.5137"/>
<dbReference type="HOGENOM" id="CLU_078938_4_1_6"/>
<dbReference type="Proteomes" id="UP000001006">
    <property type="component" value="Chromosome"/>
</dbReference>
<dbReference type="Proteomes" id="UP000002673">
    <property type="component" value="Chromosome"/>
</dbReference>
<dbReference type="GO" id="GO:1990904">
    <property type="term" value="C:ribonucleoprotein complex"/>
    <property type="evidence" value="ECO:0007669"/>
    <property type="project" value="UniProtKB-KW"/>
</dbReference>
<dbReference type="GO" id="GO:0005840">
    <property type="term" value="C:ribosome"/>
    <property type="evidence" value="ECO:0007669"/>
    <property type="project" value="UniProtKB-KW"/>
</dbReference>
<dbReference type="GO" id="GO:0019843">
    <property type="term" value="F:rRNA binding"/>
    <property type="evidence" value="ECO:0007669"/>
    <property type="project" value="UniProtKB-UniRule"/>
</dbReference>
<dbReference type="GO" id="GO:0003735">
    <property type="term" value="F:structural constituent of ribosome"/>
    <property type="evidence" value="ECO:0007669"/>
    <property type="project" value="InterPro"/>
</dbReference>
<dbReference type="GO" id="GO:0006412">
    <property type="term" value="P:translation"/>
    <property type="evidence" value="ECO:0007669"/>
    <property type="project" value="UniProtKB-UniRule"/>
</dbReference>
<dbReference type="FunFam" id="3.10.430.100:FF:000001">
    <property type="entry name" value="50S ribosomal protein L9"/>
    <property type="match status" value="1"/>
</dbReference>
<dbReference type="FunFam" id="3.40.5.10:FF:000001">
    <property type="entry name" value="50S ribosomal protein L9"/>
    <property type="match status" value="1"/>
</dbReference>
<dbReference type="Gene3D" id="3.10.430.100">
    <property type="entry name" value="Ribosomal protein L9, C-terminal domain"/>
    <property type="match status" value="1"/>
</dbReference>
<dbReference type="Gene3D" id="3.40.5.10">
    <property type="entry name" value="Ribosomal protein L9, N-terminal domain"/>
    <property type="match status" value="1"/>
</dbReference>
<dbReference type="HAMAP" id="MF_00503">
    <property type="entry name" value="Ribosomal_bL9"/>
    <property type="match status" value="1"/>
</dbReference>
<dbReference type="InterPro" id="IPR000244">
    <property type="entry name" value="Ribosomal_bL9"/>
</dbReference>
<dbReference type="InterPro" id="IPR009027">
    <property type="entry name" value="Ribosomal_bL9/RNase_H1_N"/>
</dbReference>
<dbReference type="InterPro" id="IPR020594">
    <property type="entry name" value="Ribosomal_bL9_bac/chp"/>
</dbReference>
<dbReference type="InterPro" id="IPR020069">
    <property type="entry name" value="Ribosomal_bL9_C"/>
</dbReference>
<dbReference type="InterPro" id="IPR036791">
    <property type="entry name" value="Ribosomal_bL9_C_sf"/>
</dbReference>
<dbReference type="InterPro" id="IPR020070">
    <property type="entry name" value="Ribosomal_bL9_N"/>
</dbReference>
<dbReference type="InterPro" id="IPR036935">
    <property type="entry name" value="Ribosomal_bL9_N_sf"/>
</dbReference>
<dbReference type="NCBIfam" id="TIGR00158">
    <property type="entry name" value="L9"/>
    <property type="match status" value="1"/>
</dbReference>
<dbReference type="PANTHER" id="PTHR21368">
    <property type="entry name" value="50S RIBOSOMAL PROTEIN L9"/>
    <property type="match status" value="1"/>
</dbReference>
<dbReference type="Pfam" id="PF03948">
    <property type="entry name" value="Ribosomal_L9_C"/>
    <property type="match status" value="1"/>
</dbReference>
<dbReference type="Pfam" id="PF01281">
    <property type="entry name" value="Ribosomal_L9_N"/>
    <property type="match status" value="1"/>
</dbReference>
<dbReference type="SUPFAM" id="SSF55658">
    <property type="entry name" value="L9 N-domain-like"/>
    <property type="match status" value="1"/>
</dbReference>
<dbReference type="SUPFAM" id="SSF55653">
    <property type="entry name" value="Ribosomal protein L9 C-domain"/>
    <property type="match status" value="1"/>
</dbReference>
<dbReference type="PROSITE" id="PS00651">
    <property type="entry name" value="RIBOSOMAL_L9"/>
    <property type="match status" value="1"/>
</dbReference>
<evidence type="ECO:0000255" key="1">
    <source>
        <dbReference type="HAMAP-Rule" id="MF_00503"/>
    </source>
</evidence>
<evidence type="ECO:0000305" key="2"/>
<feature type="chain" id="PRO_0000176674" description="Large ribosomal subunit protein bL9">
    <location>
        <begin position="1"/>
        <end position="149"/>
    </location>
</feature>
<feature type="modified residue" description="N6-acetyllysine" evidence="1">
    <location>
        <position position="89"/>
    </location>
</feature>
<comment type="function">
    <text evidence="1">Binds to the 23S rRNA.</text>
</comment>
<comment type="similarity">
    <text evidence="1">Belongs to the bacterial ribosomal protein bL9 family.</text>
</comment>
<organism>
    <name type="scientific">Shigella flexneri</name>
    <dbReference type="NCBI Taxonomy" id="623"/>
    <lineage>
        <taxon>Bacteria</taxon>
        <taxon>Pseudomonadati</taxon>
        <taxon>Pseudomonadota</taxon>
        <taxon>Gammaproteobacteria</taxon>
        <taxon>Enterobacterales</taxon>
        <taxon>Enterobacteriaceae</taxon>
        <taxon>Shigella</taxon>
    </lineage>
</organism>
<protein>
    <recommendedName>
        <fullName evidence="1">Large ribosomal subunit protein bL9</fullName>
    </recommendedName>
    <alternativeName>
        <fullName evidence="2">50S ribosomal protein L9</fullName>
    </alternativeName>
</protein>
<proteinExistence type="inferred from homology"/>
<accession>P0A7R4</accession>
<accession>P02418</accession>
<name>RL9_SHIFL</name>
<sequence>MQVILLDKVANLGSLGDQVNVKAGYARNFLVPQGKAVPATKKNIEFFEARRAELEAKLAEVLAAANARAEKINALETVTIASKAGDEGKLFGSIGTRDIADAVTAAGVEVAKSEVRLPNGVLRTTGEHEVSFQVHSEVFAKVIVNVVAE</sequence>
<gene>
    <name evidence="1" type="primary">rplI</name>
    <name type="ordered locus">SF4356</name>
    <name type="ordered locus">S4628</name>
</gene>